<evidence type="ECO:0000250" key="1"/>
<evidence type="ECO:0000250" key="2">
    <source>
        <dbReference type="UniProtKB" id="Q9NPD3"/>
    </source>
</evidence>
<evidence type="ECO:0000305" key="3"/>
<comment type="function">
    <text evidence="1">Non-catalytic component of the RNA exosome complex which has 3'-&gt;5' exoribonuclease activity and participates in a multitude of cellular RNA processing and degradation events.</text>
</comment>
<comment type="subunit">
    <text evidence="2">Component of the RNA exosome complex.</text>
</comment>
<comment type="subcellular location">
    <subcellularLocation>
        <location evidence="2">Cytoplasm</location>
    </subcellularLocation>
    <subcellularLocation>
        <location evidence="2">Nucleus</location>
        <location evidence="2">Nucleolus</location>
    </subcellularLocation>
    <subcellularLocation>
        <location evidence="2">Nucleus</location>
    </subcellularLocation>
    <subcellularLocation>
        <location evidence="2">Nucleus</location>
        <location evidence="2">Nucleoplasm</location>
    </subcellularLocation>
</comment>
<comment type="miscellaneous">
    <text>Exos-4.1 and tin-9.2 are transcribed on a dicistronic transcript where exos-4.1 is the upstream transcript and tin-9.2 the downstream.</text>
</comment>
<comment type="similarity">
    <text evidence="3">Belongs to the RNase PH family.</text>
</comment>
<proteinExistence type="inferred from homology"/>
<gene>
    <name type="primary">exos-4.1</name>
    <name type="ORF">B0564.1</name>
</gene>
<keyword id="KW-0963">Cytoplasm</keyword>
<keyword id="KW-0271">Exosome</keyword>
<keyword id="KW-0539">Nucleus</keyword>
<keyword id="KW-1185">Reference proteome</keyword>
<keyword id="KW-0694">RNA-binding</keyword>
<keyword id="KW-0698">rRNA processing</keyword>
<dbReference type="EMBL" id="Z73422">
    <property type="protein sequence ID" value="CAA97771.3"/>
    <property type="molecule type" value="Genomic_DNA"/>
</dbReference>
<dbReference type="PIR" id="B88880">
    <property type="entry name" value="B88880"/>
</dbReference>
<dbReference type="RefSeq" id="NP_001021274.1">
    <property type="nucleotide sequence ID" value="NM_001026103.6"/>
</dbReference>
<dbReference type="RefSeq" id="NP_001366781.1">
    <property type="nucleotide sequence ID" value="NM_001380505.2"/>
</dbReference>
<dbReference type="SMR" id="Q17533"/>
<dbReference type="BioGRID" id="2554306">
    <property type="interactions" value="1"/>
</dbReference>
<dbReference type="FunCoup" id="Q17533">
    <property type="interactions" value="2255"/>
</dbReference>
<dbReference type="STRING" id="6239.B0564.1a.1"/>
<dbReference type="PaxDb" id="6239-B0564.1a"/>
<dbReference type="PeptideAtlas" id="Q17533"/>
<dbReference type="EnsemblMetazoa" id="B0564.1a.1">
    <property type="protein sequence ID" value="B0564.1a.1"/>
    <property type="gene ID" value="WBGene00007201"/>
</dbReference>
<dbReference type="EnsemblMetazoa" id="B0564.1a.2">
    <property type="protein sequence ID" value="B0564.1a.2"/>
    <property type="gene ID" value="WBGene00007201"/>
</dbReference>
<dbReference type="EnsemblMetazoa" id="B0564.1a.3">
    <property type="protein sequence ID" value="B0564.1a.3"/>
    <property type="gene ID" value="WBGene00007201"/>
</dbReference>
<dbReference type="GeneID" id="24105309"/>
<dbReference type="AGR" id="WB:WBGene00007201"/>
<dbReference type="WormBase" id="B0564.1a">
    <property type="protein sequence ID" value="CE20469"/>
    <property type="gene ID" value="WBGene00007201"/>
    <property type="gene designation" value="exos-4.1"/>
</dbReference>
<dbReference type="eggNOG" id="KOG1068">
    <property type="taxonomic scope" value="Eukaryota"/>
</dbReference>
<dbReference type="GeneTree" id="ENSGT00940000153348"/>
<dbReference type="HOGENOM" id="CLU_063514_0_0_1"/>
<dbReference type="InParanoid" id="Q17533"/>
<dbReference type="OMA" id="ECRINTH"/>
<dbReference type="OrthoDB" id="27298at2759"/>
<dbReference type="PhylomeDB" id="Q17533"/>
<dbReference type="Reactome" id="R-CEL-429958">
    <property type="pathway name" value="mRNA decay by 3' to 5' exoribonuclease"/>
</dbReference>
<dbReference type="Reactome" id="R-CEL-450385">
    <property type="pathway name" value="Butyrate Response Factor 1 (BRF1) binds and destabilizes mRNA"/>
</dbReference>
<dbReference type="Reactome" id="R-CEL-450513">
    <property type="pathway name" value="Tristetraprolin (TTP, ZFP36) binds and destabilizes mRNA"/>
</dbReference>
<dbReference type="Reactome" id="R-CEL-6791226">
    <property type="pathway name" value="Major pathway of rRNA processing in the nucleolus and cytosol"/>
</dbReference>
<dbReference type="PRO" id="PR:Q17533"/>
<dbReference type="Proteomes" id="UP000001940">
    <property type="component" value="Chromosome IV"/>
</dbReference>
<dbReference type="Bgee" id="WBGene00007201">
    <property type="expression patterns" value="Expressed in germ line (C elegans) and 4 other cell types or tissues"/>
</dbReference>
<dbReference type="GO" id="GO:0000177">
    <property type="term" value="C:cytoplasmic exosome (RNase complex)"/>
    <property type="evidence" value="ECO:0000318"/>
    <property type="project" value="GO_Central"/>
</dbReference>
<dbReference type="GO" id="GO:0000176">
    <property type="term" value="C:nuclear exosome (RNase complex)"/>
    <property type="evidence" value="ECO:0000318"/>
    <property type="project" value="GO_Central"/>
</dbReference>
<dbReference type="GO" id="GO:0005730">
    <property type="term" value="C:nucleolus"/>
    <property type="evidence" value="ECO:0000318"/>
    <property type="project" value="GO_Central"/>
</dbReference>
<dbReference type="GO" id="GO:0005654">
    <property type="term" value="C:nucleoplasm"/>
    <property type="evidence" value="ECO:0007669"/>
    <property type="project" value="UniProtKB-SubCell"/>
</dbReference>
<dbReference type="GO" id="GO:0003723">
    <property type="term" value="F:RNA binding"/>
    <property type="evidence" value="ECO:0000318"/>
    <property type="project" value="GO_Central"/>
</dbReference>
<dbReference type="GO" id="GO:0071028">
    <property type="term" value="P:nuclear mRNA surveillance"/>
    <property type="evidence" value="ECO:0000318"/>
    <property type="project" value="GO_Central"/>
</dbReference>
<dbReference type="GO" id="GO:0071051">
    <property type="term" value="P:poly(A)-dependent snoRNA 3'-end processing"/>
    <property type="evidence" value="ECO:0000318"/>
    <property type="project" value="GO_Central"/>
</dbReference>
<dbReference type="GO" id="GO:0016075">
    <property type="term" value="P:rRNA catabolic process"/>
    <property type="evidence" value="ECO:0000318"/>
    <property type="project" value="GO_Central"/>
</dbReference>
<dbReference type="GO" id="GO:0006364">
    <property type="term" value="P:rRNA processing"/>
    <property type="evidence" value="ECO:0007669"/>
    <property type="project" value="UniProtKB-KW"/>
</dbReference>
<dbReference type="GO" id="GO:0034475">
    <property type="term" value="P:U4 snRNA 3'-end processing"/>
    <property type="evidence" value="ECO:0000318"/>
    <property type="project" value="GO_Central"/>
</dbReference>
<dbReference type="CDD" id="cd11370">
    <property type="entry name" value="RNase_PH_RRP41"/>
    <property type="match status" value="1"/>
</dbReference>
<dbReference type="FunFam" id="3.30.230.70:FF:000004">
    <property type="entry name" value="Exosome complex component Rrp41"/>
    <property type="match status" value="1"/>
</dbReference>
<dbReference type="Gene3D" id="3.30.230.70">
    <property type="entry name" value="GHMP Kinase, N-terminal domain"/>
    <property type="match status" value="1"/>
</dbReference>
<dbReference type="InterPro" id="IPR001247">
    <property type="entry name" value="ExoRNase_PH_dom1"/>
</dbReference>
<dbReference type="InterPro" id="IPR015847">
    <property type="entry name" value="ExoRNase_PH_dom2"/>
</dbReference>
<dbReference type="InterPro" id="IPR036345">
    <property type="entry name" value="ExoRNase_PH_dom2_sf"/>
</dbReference>
<dbReference type="InterPro" id="IPR027408">
    <property type="entry name" value="PNPase/RNase_PH_dom_sf"/>
</dbReference>
<dbReference type="InterPro" id="IPR020568">
    <property type="entry name" value="Ribosomal_Su5_D2-typ_SF"/>
</dbReference>
<dbReference type="InterPro" id="IPR050080">
    <property type="entry name" value="RNase_PH"/>
</dbReference>
<dbReference type="InterPro" id="IPR018336">
    <property type="entry name" value="RNase_PH_CS"/>
</dbReference>
<dbReference type="PANTHER" id="PTHR11953">
    <property type="entry name" value="EXOSOME COMPLEX COMPONENT"/>
    <property type="match status" value="1"/>
</dbReference>
<dbReference type="PANTHER" id="PTHR11953:SF0">
    <property type="entry name" value="EXOSOME COMPLEX COMPONENT RRP41"/>
    <property type="match status" value="1"/>
</dbReference>
<dbReference type="Pfam" id="PF01138">
    <property type="entry name" value="RNase_PH"/>
    <property type="match status" value="1"/>
</dbReference>
<dbReference type="Pfam" id="PF03725">
    <property type="entry name" value="RNase_PH_C"/>
    <property type="match status" value="1"/>
</dbReference>
<dbReference type="SUPFAM" id="SSF55666">
    <property type="entry name" value="Ribonuclease PH domain 2-like"/>
    <property type="match status" value="1"/>
</dbReference>
<dbReference type="SUPFAM" id="SSF54211">
    <property type="entry name" value="Ribosomal protein S5 domain 2-like"/>
    <property type="match status" value="1"/>
</dbReference>
<dbReference type="PROSITE" id="PS01277">
    <property type="entry name" value="RIBONUCLEASE_PH"/>
    <property type="match status" value="1"/>
</dbReference>
<accession>Q17533</accession>
<reference key="1">
    <citation type="journal article" date="1998" name="Science">
        <title>Genome sequence of the nematode C. elegans: a platform for investigating biology.</title>
        <authorList>
            <consortium name="The C. elegans sequencing consortium"/>
        </authorList>
    </citation>
    <scope>NUCLEOTIDE SEQUENCE [LARGE SCALE GENOMIC DNA]</scope>
    <source>
        <strain>Bristol N2</strain>
    </source>
</reference>
<protein>
    <recommendedName>
        <fullName>Putative exosome complex component RRP41</fullName>
    </recommendedName>
    <alternativeName>
        <fullName>Ribosomal RNA-processing protein 41</fullName>
    </alternativeName>
</protein>
<sequence length="240" mass="26065">MNIISEHGFRIDGRRPAQIRNINTRLGLNRNAEGSCYLEHGNTKVLCAVYGPYEGKSSKRIEDKCAIVCQYSATKFSGLERKNRTRGDRKSTEISRLLEKAFESVILTEAFPRSQLDIFCEVIQGDGSNLAACVNATSLALADAGIPMKGIASAATCGVVDGKPIVDLTSREETDLLPRVTLATICGRDEVILVELQNRLHIDHLSTVMDAAKATCADVYECLAVVAQQHLKACAPILGN</sequence>
<organism>
    <name type="scientific">Caenorhabditis elegans</name>
    <dbReference type="NCBI Taxonomy" id="6239"/>
    <lineage>
        <taxon>Eukaryota</taxon>
        <taxon>Metazoa</taxon>
        <taxon>Ecdysozoa</taxon>
        <taxon>Nematoda</taxon>
        <taxon>Chromadorea</taxon>
        <taxon>Rhabditida</taxon>
        <taxon>Rhabditina</taxon>
        <taxon>Rhabditomorpha</taxon>
        <taxon>Rhabditoidea</taxon>
        <taxon>Rhabditidae</taxon>
        <taxon>Peloderinae</taxon>
        <taxon>Caenorhabditis</taxon>
    </lineage>
</organism>
<name>EXOS4_CAEEL</name>
<feature type="chain" id="PRO_0000139960" description="Putative exosome complex component RRP41">
    <location>
        <begin position="1"/>
        <end position="240"/>
    </location>
</feature>